<gene>
    <name type="ORF">GA14609</name>
</gene>
<accession>Q290M9</accession>
<organism>
    <name type="scientific">Drosophila pseudoobscura pseudoobscura</name>
    <name type="common">Fruit fly</name>
    <dbReference type="NCBI Taxonomy" id="46245"/>
    <lineage>
        <taxon>Eukaryota</taxon>
        <taxon>Metazoa</taxon>
        <taxon>Ecdysozoa</taxon>
        <taxon>Arthropoda</taxon>
        <taxon>Hexapoda</taxon>
        <taxon>Insecta</taxon>
        <taxon>Pterygota</taxon>
        <taxon>Neoptera</taxon>
        <taxon>Endopterygota</taxon>
        <taxon>Diptera</taxon>
        <taxon>Brachycera</taxon>
        <taxon>Muscomorpha</taxon>
        <taxon>Ephydroidea</taxon>
        <taxon>Drosophilidae</taxon>
        <taxon>Drosophila</taxon>
        <taxon>Sophophora</taxon>
    </lineage>
</organism>
<feature type="transit peptide" description="Mitochondrion" evidence="3">
    <location>
        <begin position="1"/>
        <end position="34"/>
    </location>
</feature>
<feature type="chain" id="PRO_0000307349" description="Essential MCU regulator, mitochondrial">
    <location>
        <begin position="35"/>
        <end position="96"/>
    </location>
</feature>
<feature type="transmembrane region" description="Helical" evidence="3">
    <location>
        <begin position="52"/>
        <end position="72"/>
    </location>
</feature>
<keyword id="KW-0106">Calcium</keyword>
<keyword id="KW-0109">Calcium transport</keyword>
<keyword id="KW-0406">Ion transport</keyword>
<keyword id="KW-0472">Membrane</keyword>
<keyword id="KW-0496">Mitochondrion</keyword>
<keyword id="KW-0999">Mitochondrion inner membrane</keyword>
<keyword id="KW-1185">Reference proteome</keyword>
<keyword id="KW-0809">Transit peptide</keyword>
<keyword id="KW-0812">Transmembrane</keyword>
<keyword id="KW-1133">Transmembrane helix</keyword>
<keyword id="KW-0813">Transport</keyword>
<reference evidence="5" key="1">
    <citation type="journal article" date="2005" name="Genome Res.">
        <title>Comparative genome sequencing of Drosophila pseudoobscura: chromosomal, gene, and cis-element evolution.</title>
        <authorList>
            <person name="Richards S."/>
            <person name="Liu Y."/>
            <person name="Bettencourt B.R."/>
            <person name="Hradecky P."/>
            <person name="Letovsky S."/>
            <person name="Nielsen R."/>
            <person name="Thornton K."/>
            <person name="Hubisz M.J."/>
            <person name="Chen R."/>
            <person name="Meisel R.P."/>
            <person name="Couronne O."/>
            <person name="Hua S."/>
            <person name="Smith M.A."/>
            <person name="Zhang P."/>
            <person name="Liu J."/>
            <person name="Bussemaker H.J."/>
            <person name="van Batenburg M.F."/>
            <person name="Howells S.L."/>
            <person name="Scherer S.E."/>
            <person name="Sodergren E."/>
            <person name="Matthews B.B."/>
            <person name="Crosby M.A."/>
            <person name="Schroeder A.J."/>
            <person name="Ortiz-Barrientos D."/>
            <person name="Rives C.M."/>
            <person name="Metzker M.L."/>
            <person name="Muzny D.M."/>
            <person name="Scott G."/>
            <person name="Steffen D."/>
            <person name="Wheeler D.A."/>
            <person name="Worley K.C."/>
            <person name="Havlak P."/>
            <person name="Durbin K.J."/>
            <person name="Egan A."/>
            <person name="Gill R."/>
            <person name="Hume J."/>
            <person name="Morgan M.B."/>
            <person name="Miner G."/>
            <person name="Hamilton C."/>
            <person name="Huang Y."/>
            <person name="Waldron L."/>
            <person name="Verduzco D."/>
            <person name="Clerc-Blankenburg K.P."/>
            <person name="Dubchak I."/>
            <person name="Noor M.A.F."/>
            <person name="Anderson W."/>
            <person name="White K.P."/>
            <person name="Clark A.G."/>
            <person name="Schaeffer S.W."/>
            <person name="Gelbart W.M."/>
            <person name="Weinstock G.M."/>
            <person name="Gibbs R.A."/>
        </authorList>
    </citation>
    <scope>NUCLEOTIDE SEQUENCE [LARGE SCALE GENOMIC DNA]</scope>
    <source>
        <strain>MV2-25 / Tucson 14011-0121.94</strain>
    </source>
</reference>
<protein>
    <recommendedName>
        <fullName evidence="2">Essential MCU regulator, mitochondrial</fullName>
    </recommendedName>
</protein>
<name>EMRE_DROPS</name>
<sequence>MIVSRLTFPLQAAKLVARKAAGNPSNSIIQRRHMSGVYFRSGALRPKPDEMPFGLFAIFCAVIPGLFIGATISKNVANFLEENDLFVPSDDDDDED</sequence>
<comment type="function">
    <text evidence="1">Essential regulatory subunit of the mitochondrial calcium uniporter (mcu) channel, a protein that mediates calcium uptake into mitochondria.</text>
</comment>
<comment type="subcellular location">
    <subcellularLocation>
        <location evidence="2">Mitochondrion inner membrane</location>
        <topology evidence="2">Single-pass membrane protein</topology>
    </subcellularLocation>
</comment>
<comment type="similarity">
    <text evidence="4">Belongs to the SMDT1/EMRE family.</text>
</comment>
<comment type="sequence caution" evidence="4">
    <conflict type="erroneous gene model prediction">
        <sequence resource="EMBL-CDS" id="EAL25333"/>
    </conflict>
</comment>
<proteinExistence type="inferred from homology"/>
<evidence type="ECO:0000250" key="1">
    <source>
        <dbReference type="UniProtKB" id="Q7JX57"/>
    </source>
</evidence>
<evidence type="ECO:0000250" key="2">
    <source>
        <dbReference type="UniProtKB" id="Q9H4I9"/>
    </source>
</evidence>
<evidence type="ECO:0000255" key="3"/>
<evidence type="ECO:0000305" key="4"/>
<evidence type="ECO:0000312" key="5">
    <source>
        <dbReference type="EMBL" id="EAL25333.1"/>
    </source>
</evidence>
<dbReference type="EMBL" id="CM000071">
    <property type="protein sequence ID" value="EAL25333.1"/>
    <property type="status" value="ALT_SEQ"/>
    <property type="molecule type" value="Genomic_DNA"/>
</dbReference>
<dbReference type="SMR" id="Q290M9"/>
<dbReference type="FunCoup" id="Q290M9">
    <property type="interactions" value="199"/>
</dbReference>
<dbReference type="STRING" id="46245.Q290M9"/>
<dbReference type="EnsemblMetazoa" id="FBtr0366474">
    <property type="protein sequence ID" value="FBpp0329628"/>
    <property type="gene ID" value="FBgn0074636"/>
</dbReference>
<dbReference type="KEGG" id="dpo:4804152"/>
<dbReference type="CTD" id="37071"/>
<dbReference type="eggNOG" id="KOG4542">
    <property type="taxonomic scope" value="Eukaryota"/>
</dbReference>
<dbReference type="HOGENOM" id="CLU_172921_0_0_1"/>
<dbReference type="InParanoid" id="Q290M9"/>
<dbReference type="OMA" id="FAQQTAC"/>
<dbReference type="PhylomeDB" id="Q290M9"/>
<dbReference type="Proteomes" id="UP000001819">
    <property type="component" value="Chromosome 3"/>
</dbReference>
<dbReference type="Bgee" id="FBgn0074636">
    <property type="expression patterns" value="Expressed in female reproductive system and 2 other cell types or tissues"/>
</dbReference>
<dbReference type="GO" id="GO:1990246">
    <property type="term" value="C:uniplex complex"/>
    <property type="evidence" value="ECO:0007669"/>
    <property type="project" value="InterPro"/>
</dbReference>
<dbReference type="GO" id="GO:0036444">
    <property type="term" value="P:calcium import into the mitochondrion"/>
    <property type="evidence" value="ECO:0007669"/>
    <property type="project" value="InterPro"/>
</dbReference>
<dbReference type="GO" id="GO:0051560">
    <property type="term" value="P:mitochondrial calcium ion homeostasis"/>
    <property type="evidence" value="ECO:0000250"/>
    <property type="project" value="UniProtKB"/>
</dbReference>
<dbReference type="GO" id="GO:0006851">
    <property type="term" value="P:mitochondrial calcium ion transmembrane transport"/>
    <property type="evidence" value="ECO:0000250"/>
    <property type="project" value="UniProtKB"/>
</dbReference>
<dbReference type="InterPro" id="IPR018782">
    <property type="entry name" value="MCU_reg"/>
</dbReference>
<dbReference type="PANTHER" id="PTHR33904">
    <property type="entry name" value="ESSENTIAL MCU REGULATOR, MITOCHONDRIAL"/>
    <property type="match status" value="1"/>
</dbReference>
<dbReference type="PANTHER" id="PTHR33904:SF1">
    <property type="entry name" value="ESSENTIAL MCU REGULATOR, MITOCHONDRIAL"/>
    <property type="match status" value="1"/>
</dbReference>
<dbReference type="Pfam" id="PF10161">
    <property type="entry name" value="DDDD"/>
    <property type="match status" value="1"/>
</dbReference>